<name>NS6_SARS2</name>
<organismHost>
    <name type="scientific">Homo sapiens</name>
    <name type="common">Human</name>
    <dbReference type="NCBI Taxonomy" id="9606"/>
</organismHost>
<reference key="1">
    <citation type="journal article" date="2020" name="Nature">
        <title>A new coronavirus associated with human respiratory disease in China.</title>
        <authorList>
            <person name="Wu F."/>
            <person name="Zhao S."/>
            <person name="Yu B."/>
            <person name="Chen Y.-M."/>
            <person name="Wang W."/>
            <person name="Song Z.-G."/>
            <person name="Hu Y."/>
            <person name="Tao Z.-W."/>
            <person name="Tian J.-H."/>
            <person name="Pei Y.-Y."/>
            <person name="Yuan M.-L."/>
            <person name="Zhang Y.-L."/>
            <person name="Dai F.-H."/>
            <person name="Liu Y."/>
            <person name="Wang Q.-M."/>
            <person name="Zheng J.-J."/>
            <person name="Xu L."/>
            <person name="Holmes E.C."/>
            <person name="Zhang Y.-Z."/>
        </authorList>
    </citation>
    <scope>NUCLEOTIDE SEQUENCE [GENOMIC RNA]</scope>
</reference>
<reference key="2">
    <citation type="journal article" date="2020" name="Cell Rep.">
        <title>Evasion of Type I Interferon by SARS-CoV-2.</title>
        <authorList>
            <person name="Xia H."/>
            <person name="Cao Z."/>
            <person name="Xie X."/>
            <person name="Zhang X."/>
            <person name="Chen J.Y."/>
            <person name="Wang H."/>
            <person name="Menachery V.D."/>
            <person name="Rajsbaum R."/>
            <person name="Shi P.Y."/>
        </authorList>
    </citation>
    <scope>FUNCTION</scope>
    <scope>INTERACTION WITH HOST KPNA2</scope>
</reference>
<reference key="3">
    <citation type="journal article" date="2020" name="Proc. Natl. Acad. Sci. U.S.A.">
        <title>SARS-CoV-2 Orf6 hijacks Nup98 to block STAT nuclear import and antagonize interferon signaling.</title>
        <authorList>
            <person name="Miorin L."/>
            <person name="Kehrer T."/>
            <person name="Sanchez-Aparicio M.T."/>
            <person name="Zhang K."/>
            <person name="Cohen P."/>
            <person name="Patel R.S."/>
            <person name="Cupic A."/>
            <person name="Makio T."/>
            <person name="Mei M."/>
            <person name="Moreno E."/>
            <person name="Danziger O."/>
            <person name="White K.M."/>
            <person name="Rathnasinghe R."/>
            <person name="Uccellini M."/>
            <person name="Gao S."/>
            <person name="Aydillo T."/>
            <person name="Mena I."/>
            <person name="Yin X."/>
            <person name="Martin-Sancho L."/>
            <person name="Krogan N.J."/>
            <person name="Chanda S.K."/>
            <person name="Schotsaert M."/>
            <person name="Wozniak R.W."/>
            <person name="Ren Y."/>
            <person name="Rosenberg B.R."/>
            <person name="Fontoura B.M.A."/>
            <person name="Garcia-Sastre A."/>
        </authorList>
    </citation>
    <scope>FUNCTION</scope>
    <scope>INTERACTION WITH HUMAN NUP98-RAE1 COMPLEX</scope>
    <scope>MUTAGENESIS OF MET-58</scope>
</reference>
<reference key="4">
    <citation type="journal article" date="2020" name="Science">
        <title>Comparative host-coronavirus protein interaction networks reveal pan-viral disease mechanisms.</title>
        <authorList>
            <consortium name="QCRG Structural Biology Consortium"/>
            <consortium name="Zoonomia Consortium"/>
            <person name="Gordon D.E."/>
            <person name="Hiatt J."/>
            <person name="Bouhaddou M."/>
            <person name="Rezelj V.V."/>
            <person name="Ulferts S."/>
            <person name="Braberg H."/>
            <person name="Jureka A.S."/>
            <person name="Obernier K."/>
            <person name="Guo J.Z."/>
            <person name="Batra J."/>
            <person name="Kaake R.M."/>
            <person name="Weckstein A.R."/>
            <person name="Owens T.W."/>
            <person name="Gupta M."/>
            <person name="Pourmal S."/>
            <person name="Titus E.W."/>
            <person name="Cakir M."/>
            <person name="Soucheray M."/>
            <person name="McGregor M."/>
            <person name="Cakir Z."/>
            <person name="Jang G."/>
            <person name="O'Meara M.J."/>
            <person name="Tummino T.A."/>
            <person name="Zhang Z."/>
            <person name="Foussard H."/>
            <person name="Rojc A."/>
            <person name="Zhou Y."/>
            <person name="Kuchenov D."/>
            <person name="Huettenhain R."/>
            <person name="Xu J."/>
            <person name="Eckhardt M."/>
            <person name="Swaney D.L."/>
            <person name="Fabius J.M."/>
            <person name="Ummadi M."/>
            <person name="Tutuncuoglu B."/>
            <person name="Rathore U."/>
            <person name="Modak M."/>
            <person name="Haas P."/>
            <person name="Haas K.M."/>
            <person name="Naing Z.Z.C."/>
            <person name="Pulido E.H."/>
            <person name="Shi Y."/>
            <person name="Barrio-Hernandez I."/>
            <person name="Memon D."/>
            <person name="Petsalaki E."/>
            <person name="Dunham A."/>
            <person name="Marrero M.C."/>
            <person name="Burke D."/>
            <person name="Koh C."/>
            <person name="Vallet T."/>
            <person name="Silvas J.A."/>
            <person name="Azumaya C.M."/>
            <person name="Billesboelle C."/>
            <person name="Brilot A.F."/>
            <person name="Campbell M.G."/>
            <person name="Diallo A."/>
            <person name="Dickinson M.S."/>
            <person name="Diwanji D."/>
            <person name="Herrera N."/>
            <person name="Hoppe N."/>
            <person name="Kratochvil H.T."/>
            <person name="Liu Y."/>
            <person name="Merz G.E."/>
            <person name="Moritz M."/>
            <person name="Nguyen H.C."/>
            <person name="Nowotny C."/>
            <person name="Puchades C."/>
            <person name="Rizo A.N."/>
            <person name="Schulze-Gahmen U."/>
            <person name="Smith A.M."/>
            <person name="Sun M."/>
            <person name="Young I.D."/>
            <person name="Zhao J."/>
            <person name="Asarnow D."/>
            <person name="Biel J."/>
            <person name="Bowen A."/>
            <person name="Braxton J.R."/>
            <person name="Chen J."/>
            <person name="Chio C.M."/>
            <person name="Chio U.S."/>
            <person name="Deshpande I."/>
            <person name="Doan L."/>
            <person name="Faust B."/>
            <person name="Flores S."/>
            <person name="Jin M."/>
            <person name="Kim K."/>
            <person name="Lam V.L."/>
            <person name="Li F."/>
            <person name="Li J."/>
            <person name="Li Y.L."/>
            <person name="Li Y."/>
            <person name="Liu X."/>
            <person name="Lo M."/>
            <person name="Lopez K.E."/>
            <person name="Melo A.A."/>
            <person name="Moss F.R. III"/>
            <person name="Nguyen P."/>
            <person name="Paulino J."/>
            <person name="Pawar K.I."/>
            <person name="Peters J.K."/>
            <person name="Pospiech T.H. Jr."/>
            <person name="Safari M."/>
            <person name="Sangwan S."/>
            <person name="Schaefer K."/>
            <person name="Thomas P.V."/>
            <person name="Thwin A.C."/>
            <person name="Trenker R."/>
            <person name="Tse E."/>
            <person name="Tsui T.K.M."/>
            <person name="Wang F."/>
            <person name="Whitis N."/>
            <person name="Yu Z."/>
            <person name="Zhang K."/>
            <person name="Zhang Y."/>
            <person name="Zhou F."/>
            <person name="Saltzberg D."/>
            <person name="Hodder A.J."/>
            <person name="Shun-Shion A.S."/>
            <person name="Williams D.M."/>
            <person name="White K.M."/>
            <person name="Rosales R."/>
            <person name="Kehrer T."/>
            <person name="Miorin L."/>
            <person name="Moreno E."/>
            <person name="Patel A.H."/>
            <person name="Rihn S."/>
            <person name="Khalid M.M."/>
            <person name="Vallejo-Gracia A."/>
            <person name="Fozouni P."/>
            <person name="Simoneau C.R."/>
            <person name="Roth T.L."/>
            <person name="Wu D."/>
            <person name="Karim M.A."/>
            <person name="Ghoussaini M."/>
            <person name="Dunham I."/>
            <person name="Berardi F."/>
            <person name="Weigang S."/>
            <person name="Chazal M."/>
            <person name="Park J."/>
            <person name="Logue J."/>
            <person name="McGrath M."/>
            <person name="Weston S."/>
            <person name="Haupt R."/>
            <person name="Hastie C.J."/>
            <person name="Elliott M."/>
            <person name="Brown F."/>
            <person name="Burness K.A."/>
            <person name="Reid E."/>
            <person name="Dorward M."/>
            <person name="Johnson C."/>
            <person name="Wilkinson S.G."/>
            <person name="Geyer A."/>
            <person name="Giesel D.M."/>
            <person name="Baillie C."/>
            <person name="Raggett S."/>
            <person name="Leech H."/>
            <person name="Toth R."/>
            <person name="Goodman N."/>
            <person name="Keough K.C."/>
            <person name="Lind A.L."/>
            <person name="Klesh R.J."/>
            <person name="Hemphill K.R."/>
            <person name="Carlson-Stevermer J."/>
            <person name="Oki J."/>
            <person name="Holden K."/>
            <person name="Maures T."/>
            <person name="Pollard K.S."/>
            <person name="Sali A."/>
            <person name="Agard D.A."/>
            <person name="Cheng Y."/>
            <person name="Fraser J.S."/>
            <person name="Frost A."/>
            <person name="Jura N."/>
            <person name="Kortemme T."/>
            <person name="Manglik A."/>
            <person name="Southworth D.R."/>
            <person name="Stroud R.M."/>
            <person name="Alessi D.R."/>
            <person name="Davies P."/>
            <person name="Frieman M.B."/>
            <person name="Ideker T."/>
            <person name="Abate C."/>
            <person name="Jouvenet N."/>
            <person name="Kochs G."/>
            <person name="Shoichet B."/>
            <person name="Ott M."/>
            <person name="Palmarini M."/>
            <person name="Shokat K.M."/>
            <person name="Garcia-Sastre A."/>
            <person name="Rassen J.A."/>
            <person name="Grosse R."/>
            <person name="Rosenberg O.S."/>
            <person name="Verba K.A."/>
            <person name="Basler C.F."/>
            <person name="Vignuzzi M."/>
            <person name="Peden A.A."/>
            <person name="Beltrao P."/>
            <person name="Krogan N.J."/>
        </authorList>
    </citation>
    <scope>SUBCELLULAR LOCATION</scope>
</reference>
<reference key="5">
    <citation type="journal article" date="2021" name="Biochem. Biophys. Res. Commun.">
        <title>Overexpression of SARS-CoV-2 protein ORF6 dislocates RAE1 and NUP98 from the nuclear pore complex.</title>
        <authorList>
            <person name="Kato K."/>
            <person name="Ikliptikawati D.K."/>
            <person name="Kobayashi A."/>
            <person name="Kondo H."/>
            <person name="Lim K."/>
            <person name="Hazawa M."/>
            <person name="Wong R.W."/>
        </authorList>
    </citation>
    <scope>FUNCTION</scope>
    <scope>INTERACTION WITH HUMAN NUP98-RAE1 COMPLEX</scope>
</reference>
<reference key="6">
    <citation type="journal article" date="2021" name="MBio">
        <title>SARS-CoV-2 ORF6 Disrupts Bidirectional Nucleocytoplasmic Transport through Interactions with Rae1 and Nup98.</title>
        <authorList>
            <person name="Addetia A."/>
            <person name="Lieberman N.A.P."/>
            <person name="Phung Q."/>
            <person name="Hsiang T.Y."/>
            <person name="Xie H."/>
            <person name="Roychoudhury P."/>
            <person name="Shrestha L."/>
            <person name="Loprieno M.A."/>
            <person name="Huang M.L."/>
            <person name="Gale M. Jr."/>
            <person name="Jerome K.R."/>
            <person name="Greninger A.L."/>
        </authorList>
    </citation>
    <scope>FUNCTION</scope>
    <scope>INTERACTION WITH HUMAN NUP98-RAE1 COMPLEX</scope>
    <scope>MUTAGENESIS OF 1-MET--LEU-16; 22-PHE--ASP-30; 38-LYS--ASP-61; 50-SER--ASP-61; MET-58 AND ASP-61</scope>
</reference>
<reference key="7">
    <citation type="journal article" date="2022" name="J. Cell Sci.">
        <title>Decoupling SARS-CoV-2 ORF6 localization and interferon antagonism.</title>
        <authorList>
            <person name="Wong H.T."/>
            <person name="Cheung V."/>
            <person name="Salamango D.J."/>
        </authorList>
    </citation>
    <scope>SUBCELLULAR LOCATION</scope>
    <scope>MUTAGENESIS OF 18-ILE--VAL-24</scope>
</reference>
<reference evidence="10" key="8">
    <citation type="journal article" date="2022" name="Front. Mol. Biosci.">
        <title>Molecular mechanism of SARS-CoVs Orf6 targeting the Rae1-Nup98 complex to compete with mRNA nuclear export.</title>
        <authorList>
            <person name="Li T."/>
            <person name="Wen Y."/>
            <person name="Guo H."/>
            <person name="Yang T."/>
            <person name="Yang H."/>
            <person name="Ji X."/>
        </authorList>
    </citation>
    <scope>X-RAY CRYSTALLOGRAPHY (2.80 ANGSTROMS) OF 41-61</scope>
    <scope>INTERACTION WITH HOST RAE1-NUP98</scope>
    <scope>MUTAGENESIS OF MET-58</scope>
</reference>
<organism>
    <name type="scientific">Severe acute respiratory syndrome coronavirus 2</name>
    <name type="common">2019-nCoV</name>
    <name type="synonym">SARS-CoV-2</name>
    <dbReference type="NCBI Taxonomy" id="2697049"/>
    <lineage>
        <taxon>Viruses</taxon>
        <taxon>Riboviria</taxon>
        <taxon>Orthornavirae</taxon>
        <taxon>Pisuviricota</taxon>
        <taxon>Pisoniviricetes</taxon>
        <taxon>Nidovirales</taxon>
        <taxon>Cornidovirineae</taxon>
        <taxon>Coronaviridae</taxon>
        <taxon>Orthocoronavirinae</taxon>
        <taxon>Betacoronavirus</taxon>
        <taxon>Sarbecovirus</taxon>
        <taxon>Severe acute respiratory syndrome coronavirus</taxon>
    </lineage>
</organism>
<evidence type="ECO:0000250" key="1">
    <source>
        <dbReference type="UniProtKB" id="P59634"/>
    </source>
</evidence>
<evidence type="ECO:0000269" key="2">
    <source>
    </source>
</evidence>
<evidence type="ECO:0000269" key="3">
    <source>
    </source>
</evidence>
<evidence type="ECO:0000269" key="4">
    <source>
    </source>
</evidence>
<evidence type="ECO:0000269" key="5">
    <source>
    </source>
</evidence>
<evidence type="ECO:0000269" key="6">
    <source>
    </source>
</evidence>
<evidence type="ECO:0000269" key="7">
    <source>
    </source>
</evidence>
<evidence type="ECO:0000269" key="8">
    <source>
    </source>
</evidence>
<evidence type="ECO:0000305" key="9"/>
<evidence type="ECO:0007744" key="10">
    <source>
        <dbReference type="PDB" id="7VPH"/>
    </source>
</evidence>
<feature type="chain" id="PRO_0000449653" description="ORF6 protein">
    <location>
        <begin position="1"/>
        <end position="61"/>
    </location>
</feature>
<feature type="region of interest" description="Important for host Golgi localization" evidence="8">
    <location>
        <begin position="18"/>
        <end position="24"/>
    </location>
</feature>
<feature type="sequence variant" description="In strain: Eta/B.1.525." evidence="9">
    <original>F</original>
    <variation>H</variation>
    <location>
        <position position="2"/>
    </location>
</feature>
<feature type="sequence variant" description="In strain: Eta/B.1.525." evidence="9">
    <location>
        <position position="3"/>
    </location>
</feature>
<feature type="sequence variant" description="In strain: Omicron/BA.2, Omicron/BA.2.12.1, Omicron/BA.2.75, Omicron/BA.4, Omicron/BQ.1.1, Omicron/XBB.1.5, Omicron/EG.5.1." evidence="9">
    <original>D</original>
    <variation>L</variation>
    <location>
        <position position="61"/>
    </location>
</feature>
<feature type="mutagenesis site" description="Retains interaction with human NUP98-RAE1 complex. Increases down-regulation of protein expression of newly transcribed genes in host cell." evidence="6">
    <location>
        <begin position="1"/>
        <end position="16"/>
    </location>
</feature>
<feature type="mutagenesis site" description="Complete loss of Golgi localization." evidence="8">
    <original>IMRTFKV</original>
    <variation>AAAAAAA</variation>
    <location>
        <begin position="18"/>
        <end position="24"/>
    </location>
</feature>
<feature type="mutagenesis site" description="Complete loss of Golgi localization." evidence="8">
    <location>
        <begin position="18"/>
        <end position="24"/>
    </location>
</feature>
<feature type="mutagenesis site" description="Retains interaction with human NUP98-RAE1 complex. Increases down-regulation of protein expression of newly transcribed genes in host cell." evidence="6">
    <location>
        <begin position="22"/>
        <end position="30"/>
    </location>
</feature>
<feature type="mutagenesis site" description="Loss of interaction with human NUP98-RAE1 complex which suppresses the down-regulation of protein expression of newly transcribed genes in the host cell." evidence="6">
    <location>
        <begin position="38"/>
        <end position="61"/>
    </location>
</feature>
<feature type="mutagenesis site" description="Loss of interaction with human NUP98-RAE1 complex which suppresses the down-regulation of protein expression of newly transcribed genes in the host cell." evidence="6">
    <location>
        <begin position="50"/>
        <end position="61"/>
    </location>
</feature>
<feature type="mutagenesis site" description="Loss of interaction with human NUP98-RAE1 complex which suppresses the mRNA accumulation in the nucleus, the down-regulation of protein expression of newly transcribed genes in the host cell and blockade on nuclear import on a broad range of host factors." evidence="6 7">
    <original>M</original>
    <variation>A</variation>
    <location>
        <position position="58"/>
    </location>
</feature>
<feature type="mutagenesis site" description="Complete loss of binding to the NUP98-RAE1 complex and IFN antagonistic function." evidence="4 7">
    <original>M</original>
    <variation>R</variation>
    <location>
        <position position="58"/>
    </location>
</feature>
<feature type="mutagenesis site" description="Does not affect repression of reporter protein expression." evidence="6">
    <original>D</original>
    <variation>DYP</variation>
    <location>
        <position position="61"/>
    </location>
</feature>
<sequence length="61" mass="7273">MFHLVDFQVTIAEILLIIMRTFKVSIWNLDYIINLIIKNLSKSLTENKYSQLDEEQPMEID</sequence>
<comment type="function">
    <text evidence="1 2 4 5 6">Disrupts bidirectional nucleocytoplasmic transport by interacting with the host RAE1-NUP98 complex (PubMed:33360543, PubMed:33849972). Disrupts cell nuclear import complex formation by tethering karyopherin alpha 2 and karyopherin beta 1 to the membrane (PubMed:32979938). Retention of import factors at the ER/Golgi membrane leads to a loss of transport into the nucleus (By similarity). Prevents STAT1 nuclear translocation in response to interferon signaling, thus blocking the expression of interferon stimulated genes (ISGs) that display multiple antiviral activities (PubMed:33097660). Suppresses IFN-beta production possibly by blocking IRF3 nuclear translocation (PubMed:32979938). Might induce accumulation of host HNRNPA1 (PubMed:33360543).</text>
</comment>
<comment type="function">
    <text evidence="8">May play a role in viral double membrane vesicles networks to enhance viral replication.</text>
</comment>
<comment type="subunit">
    <text evidence="2 4 5 6 7">Interacts (via C-terminus) with host RAE1 in the NUP98-RAE1 complex (PubMed:35096974); this interaction disrupts the host nuclear import (PubMed:33097660, PubMed:33360543, PubMed:33849972, PubMed:35096974). Interacts with host KPNA2; this interaction may inhibit IFN-beta production by blocking IRF3 nuclear translocation (PubMed:32979938).</text>
</comment>
<comment type="interaction">
    <interactant intactId="EBI-25475897">
        <id>P0DTC6</id>
    </interactant>
    <interactant intactId="EBI-348517">
        <id>O95870</id>
        <label>ABHD16A</label>
    </interactant>
    <organismsDiffer>true</organismsDiffer>
    <experiments>3</experiments>
</comment>
<comment type="interaction">
    <interactant intactId="EBI-25475897">
        <id>P0DTC6</id>
    </interactant>
    <interactant intactId="EBI-714543">
        <id>Q15041</id>
        <label>ARL6IP1</label>
    </interactant>
    <organismsDiffer>true</organismsDiffer>
    <experiments>3</experiments>
</comment>
<comment type="interaction">
    <interactant intactId="EBI-25475897">
        <id>P0DTC6</id>
    </interactant>
    <interactant intactId="EBI-349938">
        <id>P52292</id>
        <label>KPNA2</label>
    </interactant>
    <organismsDiffer>true</organismsDiffer>
    <experiments>2</experiments>
</comment>
<comment type="interaction">
    <interactant intactId="EBI-25475897">
        <id>P0DTC6</id>
    </interactant>
    <interactant intactId="EBI-295727">
        <id>P52948</id>
        <label>NUP98</label>
    </interactant>
    <organismsDiffer>true</organismsDiffer>
    <experiments>11</experiments>
</comment>
<comment type="interaction">
    <interactant intactId="EBI-25475897">
        <id>P0DTC6</id>
    </interactant>
    <interactant intactId="EBI-9027467">
        <id>O75360</id>
        <label>PROP1</label>
    </interactant>
    <organismsDiffer>true</organismsDiffer>
    <experiments>3</experiments>
</comment>
<comment type="interaction">
    <interactant intactId="EBI-25475897">
        <id>P0DTC6</id>
    </interactant>
    <interactant intactId="EBI-724495">
        <id>P78406</id>
        <label>RAE1</label>
    </interactant>
    <organismsDiffer>true</organismsDiffer>
    <experiments>11</experiments>
</comment>
<comment type="interaction">
    <interactant intactId="EBI-25475897">
        <id>P0DTC6</id>
    </interactant>
    <interactant intactId="EBI-750345">
        <id>Q96HR9</id>
        <label>REEP6</label>
    </interactant>
    <organismsDiffer>true</organismsDiffer>
    <experiments>4</experiments>
</comment>
<comment type="interaction">
    <interactant intactId="EBI-25475897">
        <id>P0DTC6</id>
    </interactant>
    <interactant intactId="EBI-741480">
        <id>Q9UMX0</id>
        <label>UBQLN1</label>
    </interactant>
    <organismsDiffer>true</organismsDiffer>
    <experiments>3</experiments>
</comment>
<comment type="interaction">
    <interactant intactId="EBI-25475897">
        <id>P0DTC6</id>
    </interactant>
    <interactant intactId="EBI-947187">
        <id>Q9UHD9</id>
        <label>UBQLN2</label>
    </interactant>
    <organismsDiffer>true</organismsDiffer>
    <experiments>4</experiments>
</comment>
<comment type="interaction">
    <interactant intactId="EBI-25475897">
        <id>P0DTC6</id>
    </interactant>
    <interactant intactId="EBI-1054215">
        <id>Q9NYU1</id>
        <label>UGGT2</label>
    </interactant>
    <organismsDiffer>true</organismsDiffer>
    <experiments>3</experiments>
</comment>
<comment type="subcellular location">
    <subcellularLocation>
        <location evidence="3 8">Host endoplasmic reticulum membrane</location>
        <topology evidence="8">Peripheral membrane protein</topology>
    </subcellularLocation>
    <subcellularLocation>
        <location evidence="3 8">Host Golgi apparatus membrane</location>
        <topology evidence="8">Peripheral membrane protein</topology>
    </subcellularLocation>
    <text>Localizes to virus-induced vesicular structures called double membrane vesicles.</text>
</comment>
<comment type="polymorphism">
    <text evidence="9">Variant Omicron/BQ.1.1 belongs to a lineage first isolated in Nigeria (November 2022).</text>
</comment>
<comment type="polymorphism">
    <text evidence="9">Variant Omicron/XBB.1.5 belongs to a lineage first isolated in United States (November 2022). It is the result of recombination between omicron BJ.1 and BM.1.1. Moreover XBB.1.5 do not express ORF8.</text>
</comment>
<comment type="polymorphism">
    <text evidence="9">Variant Omicron/BA.1 and BA.2 belong to a lineage first isolated in South Africa (November 2021).</text>
</comment>
<comment type="similarity">
    <text evidence="9">Belongs to the coronaviruses accessory protein 6 family.</text>
</comment>
<proteinExistence type="evidence at protein level"/>
<dbReference type="EMBL" id="MN908947">
    <property type="protein sequence ID" value="QHD43420.1"/>
    <property type="molecule type" value="Genomic_RNA"/>
</dbReference>
<dbReference type="PDB" id="7F60">
    <property type="method" value="X-ray"/>
    <property type="resolution" value="2.85 A"/>
    <property type="chains" value="E/F=1-61"/>
</dbReference>
<dbReference type="PDB" id="7VPH">
    <property type="method" value="X-ray"/>
    <property type="resolution" value="2.80 A"/>
    <property type="chains" value="I/J/K/X=41-61"/>
</dbReference>
<dbReference type="PDBsum" id="7F60"/>
<dbReference type="PDBsum" id="7VPH"/>
<dbReference type="SMR" id="P0DTC6"/>
<dbReference type="BioGRID" id="4383870">
    <property type="interactions" value="1352"/>
</dbReference>
<dbReference type="FunCoup" id="P0DTC6">
    <property type="interactions" value="147"/>
</dbReference>
<dbReference type="IntAct" id="P0DTC6">
    <property type="interactions" value="111"/>
</dbReference>
<dbReference type="MINT" id="P0DTC6"/>
<dbReference type="iPTMnet" id="P0DTC6"/>
<dbReference type="AGR" id="RefSeq:YP_009724394"/>
<dbReference type="Reactome" id="R-HSA-9705671">
    <property type="pathway name" value="SARS-CoV-2 activates/modulates innate and adaptive immune responses"/>
</dbReference>
<dbReference type="Reactome" id="R-HSA-9727281">
    <property type="pathway name" value="Translation of Accessory Proteins"/>
</dbReference>
<dbReference type="SIGNOR" id="P0DTC6"/>
<dbReference type="PRO" id="PR:P0DTC6"/>
<dbReference type="Proteomes" id="UP000464024">
    <property type="component" value="Genome"/>
</dbReference>
<dbReference type="GO" id="GO:0044167">
    <property type="term" value="C:host cell endoplasmic reticulum membrane"/>
    <property type="evidence" value="ECO:0007669"/>
    <property type="project" value="UniProtKB-SubCell"/>
</dbReference>
<dbReference type="GO" id="GO:0044178">
    <property type="term" value="C:host cell Golgi membrane"/>
    <property type="evidence" value="ECO:0007669"/>
    <property type="project" value="UniProtKB-SubCell"/>
</dbReference>
<dbReference type="GO" id="GO:0016020">
    <property type="term" value="C:membrane"/>
    <property type="evidence" value="ECO:0007669"/>
    <property type="project" value="UniProtKB-KW"/>
</dbReference>
<dbReference type="GO" id="GO:0005643">
    <property type="term" value="C:nuclear pore"/>
    <property type="evidence" value="ECO:0000314"/>
    <property type="project" value="UniProt"/>
</dbReference>
<dbReference type="GO" id="GO:0140311">
    <property type="term" value="F:protein sequestering activity"/>
    <property type="evidence" value="ECO:0000314"/>
    <property type="project" value="UniProt"/>
</dbReference>
<dbReference type="GO" id="GO:0039548">
    <property type="term" value="P:symbiont-mediated suppression of host cytoplasmic pattern recognition receptor signaling pathway via inhibition of IRF3 activity"/>
    <property type="evidence" value="ECO:0000314"/>
    <property type="project" value="UniProt"/>
</dbReference>
<dbReference type="GO" id="GO:0039579">
    <property type="term" value="P:symbiont-mediated suppression of host ISG15-protein conjugation"/>
    <property type="evidence" value="ECO:0000269"/>
    <property type="project" value="SigSci"/>
</dbReference>
<dbReference type="GO" id="GO:0039563">
    <property type="term" value="P:symbiont-mediated suppression of host JAK-STAT cascade via inhibition of STAT1 activity"/>
    <property type="evidence" value="ECO:0007669"/>
    <property type="project" value="UniProtKB-KW"/>
</dbReference>
<dbReference type="GO" id="GO:0039564">
    <property type="term" value="P:symbiont-mediated suppression of host JAK-STAT cascade via inhibition of STAT2 activity"/>
    <property type="evidence" value="ECO:0007669"/>
    <property type="project" value="UniProtKB-KW"/>
</dbReference>
<dbReference type="GO" id="GO:0039502">
    <property type="term" value="P:symbiont-mediated suppression of host type I interferon-mediated signaling pathway"/>
    <property type="evidence" value="ECO:0007669"/>
    <property type="project" value="UniProtKB-KW"/>
</dbReference>
<dbReference type="InterPro" id="IPR022736">
    <property type="entry name" value="NS6_bCoV"/>
</dbReference>
<dbReference type="Pfam" id="PF12133">
    <property type="entry name" value="bCoV_NS6"/>
    <property type="match status" value="1"/>
</dbReference>
<protein>
    <recommendedName>
        <fullName>ORF6 protein</fullName>
        <shortName>ORF6</shortName>
    </recommendedName>
    <alternativeName>
        <fullName>Accessory protein 6</fullName>
    </alternativeName>
    <alternativeName>
        <fullName>Non-structural protein 6</fullName>
        <shortName>ns6</shortName>
    </alternativeName>
    <alternativeName>
        <fullName>Protein X3</fullName>
    </alternativeName>
</protein>
<accession>P0DTC6</accession>
<keyword id="KW-0002">3D-structure</keyword>
<keyword id="KW-1038">Host endoplasmic reticulum</keyword>
<keyword id="KW-1040">Host Golgi apparatus</keyword>
<keyword id="KW-1043">Host membrane</keyword>
<keyword id="KW-0945">Host-virus interaction</keyword>
<keyword id="KW-1090">Inhibition of host innate immune response by virus</keyword>
<keyword id="KW-1114">Inhibition of host interferon signaling pathway by virus</keyword>
<keyword id="KW-1105">Inhibition of host STAT1 by virus</keyword>
<keyword id="KW-1106">Inhibition of host STAT2 by virus</keyword>
<keyword id="KW-0922">Interferon antiviral system evasion</keyword>
<keyword id="KW-0472">Membrane</keyword>
<keyword id="KW-1185">Reference proteome</keyword>
<keyword id="KW-0899">Viral immunoevasion</keyword>
<keyword id="KW-0843">Virulence</keyword>
<gene>
    <name type="ORF">6</name>
</gene>